<keyword id="KW-0058">Aromatic hydrocarbons catabolism</keyword>
<keyword id="KW-0520">NAD</keyword>
<keyword id="KW-0560">Oxidoreductase</keyword>
<protein>
    <recommendedName>
        <fullName evidence="1">Acetaldehyde dehydrogenase</fullName>
        <ecNumber evidence="1">1.2.1.10</ecNumber>
    </recommendedName>
    <alternativeName>
        <fullName evidence="1">Acetaldehyde dehydrogenase [acetylating]</fullName>
    </alternativeName>
</protein>
<comment type="function">
    <text evidence="1">Catalyzes the conversion of acetaldehyde to acetyl-CoA, using NAD(+) and coenzyme A. Is the final enzyme in the meta-cleavage pathway for the degradation of aromatic compounds.</text>
</comment>
<comment type="catalytic activity">
    <reaction evidence="1">
        <text>acetaldehyde + NAD(+) + CoA = acetyl-CoA + NADH + H(+)</text>
        <dbReference type="Rhea" id="RHEA:23288"/>
        <dbReference type="ChEBI" id="CHEBI:15343"/>
        <dbReference type="ChEBI" id="CHEBI:15378"/>
        <dbReference type="ChEBI" id="CHEBI:57287"/>
        <dbReference type="ChEBI" id="CHEBI:57288"/>
        <dbReference type="ChEBI" id="CHEBI:57540"/>
        <dbReference type="ChEBI" id="CHEBI:57945"/>
        <dbReference type="EC" id="1.2.1.10"/>
    </reaction>
</comment>
<comment type="pathway">
    <text evidence="1">Aromatic compound metabolism; 3-phenylpropanoate degradation.</text>
</comment>
<comment type="subunit">
    <text evidence="1">Interacts with MhpE.</text>
</comment>
<comment type="similarity">
    <text evidence="1">Belongs to the acetaldehyde dehydrogenase family.</text>
</comment>
<name>ACDH_ECO5E</name>
<reference key="1">
    <citation type="journal article" date="2011" name="Proc. Natl. Acad. Sci. U.S.A.">
        <title>Genomic anatomy of Escherichia coli O157:H7 outbreaks.</title>
        <authorList>
            <person name="Eppinger M."/>
            <person name="Mammel M.K."/>
            <person name="Leclerc J.E."/>
            <person name="Ravel J."/>
            <person name="Cebula T.A."/>
        </authorList>
    </citation>
    <scope>NUCLEOTIDE SEQUENCE [LARGE SCALE GENOMIC DNA]</scope>
    <source>
        <strain>EC4115 / EHEC</strain>
    </source>
</reference>
<organism>
    <name type="scientific">Escherichia coli O157:H7 (strain EC4115 / EHEC)</name>
    <dbReference type="NCBI Taxonomy" id="444450"/>
    <lineage>
        <taxon>Bacteria</taxon>
        <taxon>Pseudomonadati</taxon>
        <taxon>Pseudomonadota</taxon>
        <taxon>Gammaproteobacteria</taxon>
        <taxon>Enterobacterales</taxon>
        <taxon>Enterobacteriaceae</taxon>
        <taxon>Escherichia</taxon>
    </lineage>
</organism>
<accession>B5Z2Q6</accession>
<dbReference type="EC" id="1.2.1.10" evidence="1"/>
<dbReference type="EMBL" id="CP001164">
    <property type="protein sequence ID" value="ACI39054.1"/>
    <property type="molecule type" value="Genomic_DNA"/>
</dbReference>
<dbReference type="RefSeq" id="WP_000044300.1">
    <property type="nucleotide sequence ID" value="NC_011353.1"/>
</dbReference>
<dbReference type="SMR" id="B5Z2Q6"/>
<dbReference type="KEGG" id="ecf:ECH74115_0426"/>
<dbReference type="HOGENOM" id="CLU_062208_0_0_6"/>
<dbReference type="UniPathway" id="UPA00714"/>
<dbReference type="GO" id="GO:0008774">
    <property type="term" value="F:acetaldehyde dehydrogenase (acetylating) activity"/>
    <property type="evidence" value="ECO:0007669"/>
    <property type="project" value="UniProtKB-UniRule"/>
</dbReference>
<dbReference type="GO" id="GO:0051287">
    <property type="term" value="F:NAD binding"/>
    <property type="evidence" value="ECO:0007669"/>
    <property type="project" value="UniProtKB-UniRule"/>
</dbReference>
<dbReference type="GO" id="GO:0019380">
    <property type="term" value="P:3-phenylpropionate catabolic process"/>
    <property type="evidence" value="ECO:0007669"/>
    <property type="project" value="UniProtKB-UniRule"/>
</dbReference>
<dbReference type="CDD" id="cd23933">
    <property type="entry name" value="ALDH_C"/>
    <property type="match status" value="1"/>
</dbReference>
<dbReference type="FunFam" id="3.30.360.10:FF:000021">
    <property type="entry name" value="Acetaldehyde dehydrogenase"/>
    <property type="match status" value="1"/>
</dbReference>
<dbReference type="Gene3D" id="3.30.360.10">
    <property type="entry name" value="Dihydrodipicolinate Reductase, domain 2"/>
    <property type="match status" value="1"/>
</dbReference>
<dbReference type="Gene3D" id="3.40.50.720">
    <property type="entry name" value="NAD(P)-binding Rossmann-like Domain"/>
    <property type="match status" value="1"/>
</dbReference>
<dbReference type="HAMAP" id="MF_01657">
    <property type="entry name" value="Ac_ald_DH_ac"/>
    <property type="match status" value="1"/>
</dbReference>
<dbReference type="InterPro" id="IPR003361">
    <property type="entry name" value="Acetaldehyde_dehydrogenase"/>
</dbReference>
<dbReference type="InterPro" id="IPR015426">
    <property type="entry name" value="Acetylaldehyde_DH_C"/>
</dbReference>
<dbReference type="InterPro" id="IPR036291">
    <property type="entry name" value="NAD(P)-bd_dom_sf"/>
</dbReference>
<dbReference type="InterPro" id="IPR000534">
    <property type="entry name" value="Semialdehyde_DH_NAD-bd"/>
</dbReference>
<dbReference type="NCBIfam" id="TIGR03215">
    <property type="entry name" value="ac_ald_DH_ac"/>
    <property type="match status" value="1"/>
</dbReference>
<dbReference type="NCBIfam" id="NF006157">
    <property type="entry name" value="PRK08300.1"/>
    <property type="match status" value="1"/>
</dbReference>
<dbReference type="Pfam" id="PF09290">
    <property type="entry name" value="AcetDehyd-dimer"/>
    <property type="match status" value="1"/>
</dbReference>
<dbReference type="Pfam" id="PF01118">
    <property type="entry name" value="Semialdhyde_dh"/>
    <property type="match status" value="1"/>
</dbReference>
<dbReference type="PIRSF" id="PIRSF015689">
    <property type="entry name" value="Actaldh_dh_actl"/>
    <property type="match status" value="1"/>
</dbReference>
<dbReference type="SMART" id="SM00859">
    <property type="entry name" value="Semialdhyde_dh"/>
    <property type="match status" value="1"/>
</dbReference>
<dbReference type="SUPFAM" id="SSF55347">
    <property type="entry name" value="Glyceraldehyde-3-phosphate dehydrogenase-like, C-terminal domain"/>
    <property type="match status" value="1"/>
</dbReference>
<dbReference type="SUPFAM" id="SSF51735">
    <property type="entry name" value="NAD(P)-binding Rossmann-fold domains"/>
    <property type="match status" value="1"/>
</dbReference>
<proteinExistence type="inferred from homology"/>
<evidence type="ECO:0000255" key="1">
    <source>
        <dbReference type="HAMAP-Rule" id="MF_01657"/>
    </source>
</evidence>
<sequence length="316" mass="33587">MSKRKVAIIGSGNIGTDLMIKILRHDQHLEMAVMVGIDPQSDGLARARRMGVATTHEGVIGLMNMPEFADIDIVFDATSAGAHVKNDAALREAKPDIRLIDLTPAAIGPYCVPVVNLEENVDQLNVNMVTCGGQATIPMVAAVSRVVRVHYAEIIASIASKSAGPGTRANIDEFTETTSRAIEVVGGAAKGKAIIVLNPAEPPLMMRDTVYVLSDEASQDDIEASINEMAEAVQAYVPGYRLKQRVQFEVIPQDKPVNLPGVGQFSGLKTAVWLEVEGAAHYLPAYAGNLDIMTSSALATAEKMAQSLARKAGEAA</sequence>
<feature type="chain" id="PRO_1000187030" description="Acetaldehyde dehydrogenase">
    <location>
        <begin position="1"/>
        <end position="316"/>
    </location>
</feature>
<feature type="active site" description="Acyl-thioester intermediate" evidence="1">
    <location>
        <position position="131"/>
    </location>
</feature>
<feature type="binding site" evidence="1">
    <location>
        <begin position="11"/>
        <end position="14"/>
    </location>
    <ligand>
        <name>NAD(+)</name>
        <dbReference type="ChEBI" id="CHEBI:57540"/>
    </ligand>
</feature>
<feature type="binding site" evidence="1">
    <location>
        <begin position="162"/>
        <end position="170"/>
    </location>
    <ligand>
        <name>NAD(+)</name>
        <dbReference type="ChEBI" id="CHEBI:57540"/>
    </ligand>
</feature>
<feature type="binding site" evidence="1">
    <location>
        <position position="289"/>
    </location>
    <ligand>
        <name>NAD(+)</name>
        <dbReference type="ChEBI" id="CHEBI:57540"/>
    </ligand>
</feature>
<gene>
    <name evidence="1" type="primary">mhpF</name>
    <name type="ordered locus">ECH74115_0426</name>
</gene>